<proteinExistence type="inferred from homology"/>
<accession>Q49WA1</accession>
<evidence type="ECO:0000255" key="1">
    <source>
        <dbReference type="HAMAP-Rule" id="MF_00473"/>
    </source>
</evidence>
<comment type="function">
    <text evidence="1">Catalyzes the reversible isomerization of glucose-6-phosphate to fructose-6-phosphate.</text>
</comment>
<comment type="catalytic activity">
    <reaction evidence="1">
        <text>alpha-D-glucose 6-phosphate = beta-D-fructose 6-phosphate</text>
        <dbReference type="Rhea" id="RHEA:11816"/>
        <dbReference type="ChEBI" id="CHEBI:57634"/>
        <dbReference type="ChEBI" id="CHEBI:58225"/>
        <dbReference type="EC" id="5.3.1.9"/>
    </reaction>
</comment>
<comment type="pathway">
    <text evidence="1">Carbohydrate biosynthesis; gluconeogenesis.</text>
</comment>
<comment type="pathway">
    <text evidence="1">Carbohydrate degradation; glycolysis; D-glyceraldehyde 3-phosphate and glycerone phosphate from D-glucose: step 2/4.</text>
</comment>
<comment type="subcellular location">
    <subcellularLocation>
        <location evidence="1">Cytoplasm</location>
    </subcellularLocation>
</comment>
<comment type="similarity">
    <text evidence="1">Belongs to the GPI family.</text>
</comment>
<dbReference type="EC" id="5.3.1.9" evidence="1"/>
<dbReference type="EMBL" id="AP008934">
    <property type="protein sequence ID" value="BAE18958.1"/>
    <property type="molecule type" value="Genomic_DNA"/>
</dbReference>
<dbReference type="RefSeq" id="WP_011303508.1">
    <property type="nucleotide sequence ID" value="NZ_MTGA01000039.1"/>
</dbReference>
<dbReference type="SMR" id="Q49WA1"/>
<dbReference type="GeneID" id="3616468"/>
<dbReference type="KEGG" id="ssp:SSP1813"/>
<dbReference type="PATRIC" id="fig|342451.11.peg.1809"/>
<dbReference type="eggNOG" id="COG0166">
    <property type="taxonomic scope" value="Bacteria"/>
</dbReference>
<dbReference type="HOGENOM" id="CLU_037303_0_1_9"/>
<dbReference type="OrthoDB" id="140919at2"/>
<dbReference type="UniPathway" id="UPA00109">
    <property type="reaction ID" value="UER00181"/>
</dbReference>
<dbReference type="UniPathway" id="UPA00138"/>
<dbReference type="Proteomes" id="UP000006371">
    <property type="component" value="Chromosome"/>
</dbReference>
<dbReference type="GO" id="GO:0005829">
    <property type="term" value="C:cytosol"/>
    <property type="evidence" value="ECO:0007669"/>
    <property type="project" value="TreeGrafter"/>
</dbReference>
<dbReference type="GO" id="GO:0097367">
    <property type="term" value="F:carbohydrate derivative binding"/>
    <property type="evidence" value="ECO:0007669"/>
    <property type="project" value="InterPro"/>
</dbReference>
<dbReference type="GO" id="GO:0004347">
    <property type="term" value="F:glucose-6-phosphate isomerase activity"/>
    <property type="evidence" value="ECO:0007669"/>
    <property type="project" value="UniProtKB-UniRule"/>
</dbReference>
<dbReference type="GO" id="GO:0048029">
    <property type="term" value="F:monosaccharide binding"/>
    <property type="evidence" value="ECO:0007669"/>
    <property type="project" value="TreeGrafter"/>
</dbReference>
<dbReference type="GO" id="GO:0006094">
    <property type="term" value="P:gluconeogenesis"/>
    <property type="evidence" value="ECO:0007669"/>
    <property type="project" value="UniProtKB-UniRule"/>
</dbReference>
<dbReference type="GO" id="GO:0051156">
    <property type="term" value="P:glucose 6-phosphate metabolic process"/>
    <property type="evidence" value="ECO:0007669"/>
    <property type="project" value="TreeGrafter"/>
</dbReference>
<dbReference type="GO" id="GO:0006096">
    <property type="term" value="P:glycolytic process"/>
    <property type="evidence" value="ECO:0007669"/>
    <property type="project" value="UniProtKB-UniRule"/>
</dbReference>
<dbReference type="CDD" id="cd05015">
    <property type="entry name" value="SIS_PGI_1"/>
    <property type="match status" value="1"/>
</dbReference>
<dbReference type="CDD" id="cd05016">
    <property type="entry name" value="SIS_PGI_2"/>
    <property type="match status" value="1"/>
</dbReference>
<dbReference type="FunFam" id="3.40.50.10490:FF:000015">
    <property type="entry name" value="Glucose-6-phosphate isomerase"/>
    <property type="match status" value="1"/>
</dbReference>
<dbReference type="FunFam" id="3.40.50.10490:FF:000016">
    <property type="entry name" value="Glucose-6-phosphate isomerase"/>
    <property type="match status" value="1"/>
</dbReference>
<dbReference type="Gene3D" id="3.40.50.10490">
    <property type="entry name" value="Glucose-6-phosphate isomerase like protein, domain 1"/>
    <property type="match status" value="3"/>
</dbReference>
<dbReference type="HAMAP" id="MF_00473">
    <property type="entry name" value="G6P_isomerase"/>
    <property type="match status" value="1"/>
</dbReference>
<dbReference type="InterPro" id="IPR001672">
    <property type="entry name" value="G6P_Isomerase"/>
</dbReference>
<dbReference type="InterPro" id="IPR018189">
    <property type="entry name" value="Phosphoglucose_isomerase_CS"/>
</dbReference>
<dbReference type="InterPro" id="IPR046348">
    <property type="entry name" value="SIS_dom_sf"/>
</dbReference>
<dbReference type="InterPro" id="IPR035476">
    <property type="entry name" value="SIS_PGI_1"/>
</dbReference>
<dbReference type="InterPro" id="IPR035482">
    <property type="entry name" value="SIS_PGI_2"/>
</dbReference>
<dbReference type="NCBIfam" id="NF010697">
    <property type="entry name" value="PRK14097.1"/>
    <property type="match status" value="1"/>
</dbReference>
<dbReference type="PANTHER" id="PTHR11469">
    <property type="entry name" value="GLUCOSE-6-PHOSPHATE ISOMERASE"/>
    <property type="match status" value="1"/>
</dbReference>
<dbReference type="PANTHER" id="PTHR11469:SF1">
    <property type="entry name" value="GLUCOSE-6-PHOSPHATE ISOMERASE"/>
    <property type="match status" value="1"/>
</dbReference>
<dbReference type="Pfam" id="PF00342">
    <property type="entry name" value="PGI"/>
    <property type="match status" value="1"/>
</dbReference>
<dbReference type="PRINTS" id="PR00662">
    <property type="entry name" value="G6PISOMERASE"/>
</dbReference>
<dbReference type="SUPFAM" id="SSF53697">
    <property type="entry name" value="SIS domain"/>
    <property type="match status" value="1"/>
</dbReference>
<dbReference type="PROSITE" id="PS00765">
    <property type="entry name" value="P_GLUCOSE_ISOMERASE_1"/>
    <property type="match status" value="1"/>
</dbReference>
<dbReference type="PROSITE" id="PS00174">
    <property type="entry name" value="P_GLUCOSE_ISOMERASE_2"/>
    <property type="match status" value="1"/>
</dbReference>
<dbReference type="PROSITE" id="PS51463">
    <property type="entry name" value="P_GLUCOSE_ISOMERASE_3"/>
    <property type="match status" value="1"/>
</dbReference>
<reference key="1">
    <citation type="journal article" date="2005" name="Proc. Natl. Acad. Sci. U.S.A.">
        <title>Whole genome sequence of Staphylococcus saprophyticus reveals the pathogenesis of uncomplicated urinary tract infection.</title>
        <authorList>
            <person name="Kuroda M."/>
            <person name="Yamashita A."/>
            <person name="Hirakawa H."/>
            <person name="Kumano M."/>
            <person name="Morikawa K."/>
            <person name="Higashide M."/>
            <person name="Maruyama A."/>
            <person name="Inose Y."/>
            <person name="Matoba K."/>
            <person name="Toh H."/>
            <person name="Kuhara S."/>
            <person name="Hattori M."/>
            <person name="Ohta T."/>
        </authorList>
    </citation>
    <scope>NUCLEOTIDE SEQUENCE [LARGE SCALE GENOMIC DNA]</scope>
    <source>
        <strain>ATCC 15305 / DSM 20229 / NCIMB 8711 / NCTC 7292 / S-41</strain>
    </source>
</reference>
<organism>
    <name type="scientific">Staphylococcus saprophyticus subsp. saprophyticus (strain ATCC 15305 / DSM 20229 / NCIMB 8711 / NCTC 7292 / S-41)</name>
    <dbReference type="NCBI Taxonomy" id="342451"/>
    <lineage>
        <taxon>Bacteria</taxon>
        <taxon>Bacillati</taxon>
        <taxon>Bacillota</taxon>
        <taxon>Bacilli</taxon>
        <taxon>Bacillales</taxon>
        <taxon>Staphylococcaceae</taxon>
        <taxon>Staphylococcus</taxon>
    </lineage>
</organism>
<protein>
    <recommendedName>
        <fullName evidence="1">Glucose-6-phosphate isomerase</fullName>
        <shortName evidence="1">GPI</shortName>
        <ecNumber evidence="1">5.3.1.9</ecNumber>
    </recommendedName>
    <alternativeName>
        <fullName evidence="1">Phosphoglucose isomerase</fullName>
        <shortName evidence="1">PGI</shortName>
    </alternativeName>
    <alternativeName>
        <fullName evidence="1">Phosphohexose isomerase</fullName>
        <shortName evidence="1">PHI</shortName>
    </alternativeName>
</protein>
<gene>
    <name evidence="1" type="primary">pgi</name>
    <name type="ordered locus">SSP1813</name>
</gene>
<sequence>MTHIQLDYGKTLEFFGEHELQQQKDIVKSIHNTIHKGTGAGSDFLGWIDLPVDYDKEEFSRILEASKRVKDNSEVFVVIGIGGSYLGARAAIEMLTSSFRNSDEYPEIVFVGNHLSSTYTQELIDYLDGKDFSVNVISKSGTTTEPAVSFRLFKQLLENKYGKEEAKKRIFATTDKEKGALKQLATNEGYETFVVPDDIGGRYSVLTAVGLLPIAVAGIDIKAMMEGAAKAREELSSENLEDNIAYQYATIRNVLYAKGYDTEMLINYEPSMQYFNEWWKQLFGESEGKDYKGIYPSSANYTTDLHSLGQYVQEGRRFLFETVVKVNNPKHDITIEEDSDNLDGLNYLAGKTIDEVNTKAFEGTLLAHTDGGVPNIVLNIPRLDEETFGYVVYFFELACSMSGYQLGVNPFNQPGVEAYKQNMFALLGKQGFEDKKEALEKRL</sequence>
<feature type="chain" id="PRO_0000230937" description="Glucose-6-phosphate isomerase">
    <location>
        <begin position="1"/>
        <end position="443"/>
    </location>
</feature>
<feature type="active site" description="Proton donor" evidence="1">
    <location>
        <position position="285"/>
    </location>
</feature>
<feature type="active site" evidence="1">
    <location>
        <position position="306"/>
    </location>
</feature>
<feature type="active site" evidence="1">
    <location>
        <position position="420"/>
    </location>
</feature>
<keyword id="KW-0963">Cytoplasm</keyword>
<keyword id="KW-0312">Gluconeogenesis</keyword>
<keyword id="KW-0324">Glycolysis</keyword>
<keyword id="KW-0413">Isomerase</keyword>
<keyword id="KW-1185">Reference proteome</keyword>
<name>G6PI_STAS1</name>